<sequence length="269" mass="30472">MLEEINYDTKLFGLIGKNIKYTLSPYIHNFSFRTLGINAVYLVFDLDEMKFKRSISGILEIAEGLNVTIPYKDEVMKYLDNTDTHSTRIQAVNTIYKKSGYNTDYLAIKNLVRKKIKNVSGYECYIYGAGGAAKAAAFALSELGCSSISIVNRTKSRAYELAELLNKNGYNASIKENCNITNNILIVNSTPNSSVVPEDCVKKSDLVIEFVYRPVETELIKNAKKYGIQYINGLEILVNQAVEAEKIWFNKSVADEKIIEYLYARELVW</sequence>
<organism>
    <name type="scientific">Saccharolobus solfataricus (strain ATCC 35092 / DSM 1617 / JCM 11322 / P2)</name>
    <name type="common">Sulfolobus solfataricus</name>
    <dbReference type="NCBI Taxonomy" id="273057"/>
    <lineage>
        <taxon>Archaea</taxon>
        <taxon>Thermoproteota</taxon>
        <taxon>Thermoprotei</taxon>
        <taxon>Sulfolobales</taxon>
        <taxon>Sulfolobaceae</taxon>
        <taxon>Saccharolobus</taxon>
    </lineage>
</organism>
<keyword id="KW-0028">Amino-acid biosynthesis</keyword>
<keyword id="KW-0057">Aromatic amino acid biosynthesis</keyword>
<keyword id="KW-0521">NADP</keyword>
<keyword id="KW-0560">Oxidoreductase</keyword>
<keyword id="KW-1185">Reference proteome</keyword>
<accession>Q980I8</accession>
<comment type="function">
    <text evidence="1">Involved in the biosynthesis of the chorismate, which leads to the biosynthesis of aromatic amino acids. Catalyzes the reversible NADPH linked reduction of 3-dehydroshikimate (DHSA) to yield shikimate (SA).</text>
</comment>
<comment type="catalytic activity">
    <reaction evidence="1">
        <text>shikimate + NADP(+) = 3-dehydroshikimate + NADPH + H(+)</text>
        <dbReference type="Rhea" id="RHEA:17737"/>
        <dbReference type="ChEBI" id="CHEBI:15378"/>
        <dbReference type="ChEBI" id="CHEBI:16630"/>
        <dbReference type="ChEBI" id="CHEBI:36208"/>
        <dbReference type="ChEBI" id="CHEBI:57783"/>
        <dbReference type="ChEBI" id="CHEBI:58349"/>
        <dbReference type="EC" id="1.1.1.25"/>
    </reaction>
</comment>
<comment type="pathway">
    <text evidence="1">Metabolic intermediate biosynthesis; chorismate biosynthesis; chorismate from D-erythrose 4-phosphate and phosphoenolpyruvate: step 4/7.</text>
</comment>
<comment type="subunit">
    <text evidence="1">Homodimer.</text>
</comment>
<comment type="similarity">
    <text evidence="1">Belongs to the shikimate dehydrogenase family.</text>
</comment>
<proteinExistence type="inferred from homology"/>
<evidence type="ECO:0000255" key="1">
    <source>
        <dbReference type="HAMAP-Rule" id="MF_00222"/>
    </source>
</evidence>
<reference key="1">
    <citation type="journal article" date="2001" name="Proc. Natl. Acad. Sci. U.S.A.">
        <title>The complete genome of the crenarchaeon Sulfolobus solfataricus P2.</title>
        <authorList>
            <person name="She Q."/>
            <person name="Singh R.K."/>
            <person name="Confalonieri F."/>
            <person name="Zivanovic Y."/>
            <person name="Allard G."/>
            <person name="Awayez M.J."/>
            <person name="Chan-Weiher C.C.-Y."/>
            <person name="Clausen I.G."/>
            <person name="Curtis B.A."/>
            <person name="De Moors A."/>
            <person name="Erauso G."/>
            <person name="Fletcher C."/>
            <person name="Gordon P.M.K."/>
            <person name="Heikamp-de Jong I."/>
            <person name="Jeffries A.C."/>
            <person name="Kozera C.J."/>
            <person name="Medina N."/>
            <person name="Peng X."/>
            <person name="Thi-Ngoc H.P."/>
            <person name="Redder P."/>
            <person name="Schenk M.E."/>
            <person name="Theriault C."/>
            <person name="Tolstrup N."/>
            <person name="Charlebois R.L."/>
            <person name="Doolittle W.F."/>
            <person name="Duguet M."/>
            <person name="Gaasterland T."/>
            <person name="Garrett R.A."/>
            <person name="Ragan M.A."/>
            <person name="Sensen C.W."/>
            <person name="Van der Oost J."/>
        </authorList>
    </citation>
    <scope>NUCLEOTIDE SEQUENCE [LARGE SCALE GENOMIC DNA]</scope>
    <source>
        <strain>ATCC 35092 / DSM 1617 / JCM 11322 / P2</strain>
    </source>
</reference>
<protein>
    <recommendedName>
        <fullName evidence="1">Shikimate dehydrogenase (NADP(+))</fullName>
        <shortName evidence="1">SDH</shortName>
        <ecNumber evidence="1">1.1.1.25</ecNumber>
    </recommendedName>
</protein>
<feature type="chain" id="PRO_1000021355" description="Shikimate dehydrogenase (NADP(+))">
    <location>
        <begin position="1"/>
        <end position="269"/>
    </location>
</feature>
<feature type="active site" description="Proton acceptor" evidence="1">
    <location>
        <position position="72"/>
    </location>
</feature>
<feature type="binding site" evidence="1">
    <location>
        <begin position="22"/>
        <end position="24"/>
    </location>
    <ligand>
        <name>shikimate</name>
        <dbReference type="ChEBI" id="CHEBI:36208"/>
    </ligand>
</feature>
<feature type="binding site" evidence="1">
    <location>
        <position position="68"/>
    </location>
    <ligand>
        <name>shikimate</name>
        <dbReference type="ChEBI" id="CHEBI:36208"/>
    </ligand>
</feature>
<feature type="binding site" evidence="1">
    <location>
        <position position="93"/>
    </location>
    <ligand>
        <name>shikimate</name>
        <dbReference type="ChEBI" id="CHEBI:36208"/>
    </ligand>
</feature>
<feature type="binding site" evidence="1">
    <location>
        <position position="104"/>
    </location>
    <ligand>
        <name>shikimate</name>
        <dbReference type="ChEBI" id="CHEBI:36208"/>
    </ligand>
</feature>
<feature type="binding site" evidence="1">
    <location>
        <begin position="128"/>
        <end position="132"/>
    </location>
    <ligand>
        <name>NADP(+)</name>
        <dbReference type="ChEBI" id="CHEBI:58349"/>
    </ligand>
</feature>
<feature type="binding site" evidence="1">
    <location>
        <begin position="152"/>
        <end position="157"/>
    </location>
    <ligand>
        <name>NADP(+)</name>
        <dbReference type="ChEBI" id="CHEBI:58349"/>
    </ligand>
</feature>
<feature type="binding site" evidence="1">
    <location>
        <position position="210"/>
    </location>
    <ligand>
        <name>NADP(+)</name>
        <dbReference type="ChEBI" id="CHEBI:58349"/>
    </ligand>
</feature>
<feature type="binding site" evidence="1">
    <location>
        <position position="212"/>
    </location>
    <ligand>
        <name>shikimate</name>
        <dbReference type="ChEBI" id="CHEBI:36208"/>
    </ligand>
</feature>
<feature type="binding site" evidence="1">
    <location>
        <position position="233"/>
    </location>
    <ligand>
        <name>NADP(+)</name>
        <dbReference type="ChEBI" id="CHEBI:58349"/>
    </ligand>
</feature>
<name>AROE_SACS2</name>
<gene>
    <name evidence="1" type="primary">aroE</name>
    <name type="ordered locus">SSO0306</name>
</gene>
<dbReference type="EC" id="1.1.1.25" evidence="1"/>
<dbReference type="EMBL" id="AE006641">
    <property type="protein sequence ID" value="AAK40643.1"/>
    <property type="molecule type" value="Genomic_DNA"/>
</dbReference>
<dbReference type="PIR" id="D90173">
    <property type="entry name" value="D90173"/>
</dbReference>
<dbReference type="RefSeq" id="WP_009990598.1">
    <property type="nucleotide sequence ID" value="NC_002754.1"/>
</dbReference>
<dbReference type="SMR" id="Q980I8"/>
<dbReference type="STRING" id="273057.SSO0306"/>
<dbReference type="PaxDb" id="273057-SSO0306"/>
<dbReference type="EnsemblBacteria" id="AAK40643">
    <property type="protein sequence ID" value="AAK40643"/>
    <property type="gene ID" value="SSO0306"/>
</dbReference>
<dbReference type="KEGG" id="sso:SSO0306"/>
<dbReference type="PATRIC" id="fig|273057.12.peg.299"/>
<dbReference type="eggNOG" id="arCOG01033">
    <property type="taxonomic scope" value="Archaea"/>
</dbReference>
<dbReference type="HOGENOM" id="CLU_044063_4_1_2"/>
<dbReference type="InParanoid" id="Q980I8"/>
<dbReference type="PhylomeDB" id="Q980I8"/>
<dbReference type="UniPathway" id="UPA00053">
    <property type="reaction ID" value="UER00087"/>
</dbReference>
<dbReference type="Proteomes" id="UP000001974">
    <property type="component" value="Chromosome"/>
</dbReference>
<dbReference type="GO" id="GO:0004764">
    <property type="term" value="F:shikimate 3-dehydrogenase (NADP+) activity"/>
    <property type="evidence" value="ECO:0000318"/>
    <property type="project" value="GO_Central"/>
</dbReference>
<dbReference type="GO" id="GO:0008652">
    <property type="term" value="P:amino acid biosynthetic process"/>
    <property type="evidence" value="ECO:0007669"/>
    <property type="project" value="UniProtKB-KW"/>
</dbReference>
<dbReference type="GO" id="GO:0009073">
    <property type="term" value="P:aromatic amino acid family biosynthetic process"/>
    <property type="evidence" value="ECO:0007669"/>
    <property type="project" value="UniProtKB-KW"/>
</dbReference>
<dbReference type="GO" id="GO:0009423">
    <property type="term" value="P:chorismate biosynthetic process"/>
    <property type="evidence" value="ECO:0000318"/>
    <property type="project" value="GO_Central"/>
</dbReference>
<dbReference type="GO" id="GO:0019632">
    <property type="term" value="P:shikimate metabolic process"/>
    <property type="evidence" value="ECO:0000318"/>
    <property type="project" value="GO_Central"/>
</dbReference>
<dbReference type="CDD" id="cd01065">
    <property type="entry name" value="NAD_bind_Shikimate_DH"/>
    <property type="match status" value="1"/>
</dbReference>
<dbReference type="Gene3D" id="3.40.50.10860">
    <property type="entry name" value="Leucine Dehydrogenase, chain A, domain 1"/>
    <property type="match status" value="1"/>
</dbReference>
<dbReference type="Gene3D" id="3.40.50.720">
    <property type="entry name" value="NAD(P)-binding Rossmann-like Domain"/>
    <property type="match status" value="1"/>
</dbReference>
<dbReference type="HAMAP" id="MF_00222">
    <property type="entry name" value="Shikimate_DH_AroE"/>
    <property type="match status" value="1"/>
</dbReference>
<dbReference type="InterPro" id="IPR046346">
    <property type="entry name" value="Aminoacid_DH-like_N_sf"/>
</dbReference>
<dbReference type="InterPro" id="IPR036291">
    <property type="entry name" value="NAD(P)-bd_dom_sf"/>
</dbReference>
<dbReference type="InterPro" id="IPR013708">
    <property type="entry name" value="Shikimate_DH-bd_N"/>
</dbReference>
<dbReference type="InterPro" id="IPR022893">
    <property type="entry name" value="Shikimate_DH_fam"/>
</dbReference>
<dbReference type="InterPro" id="IPR006151">
    <property type="entry name" value="Shikm_DH/Glu-tRNA_Rdtase"/>
</dbReference>
<dbReference type="PANTHER" id="PTHR21089:SF1">
    <property type="entry name" value="BIFUNCTIONAL 3-DEHYDROQUINATE DEHYDRATASE_SHIKIMATE DEHYDROGENASE, CHLOROPLASTIC"/>
    <property type="match status" value="1"/>
</dbReference>
<dbReference type="PANTHER" id="PTHR21089">
    <property type="entry name" value="SHIKIMATE DEHYDROGENASE"/>
    <property type="match status" value="1"/>
</dbReference>
<dbReference type="Pfam" id="PF01488">
    <property type="entry name" value="Shikimate_DH"/>
    <property type="match status" value="1"/>
</dbReference>
<dbReference type="Pfam" id="PF08501">
    <property type="entry name" value="Shikimate_dh_N"/>
    <property type="match status" value="1"/>
</dbReference>
<dbReference type="SUPFAM" id="SSF53223">
    <property type="entry name" value="Aminoacid dehydrogenase-like, N-terminal domain"/>
    <property type="match status" value="1"/>
</dbReference>
<dbReference type="SUPFAM" id="SSF51735">
    <property type="entry name" value="NAD(P)-binding Rossmann-fold domains"/>
    <property type="match status" value="1"/>
</dbReference>